<accession>A4VQN0</accession>
<protein>
    <recommendedName>
        <fullName evidence="1">Small ribosomal subunit protein bS6</fullName>
    </recommendedName>
    <alternativeName>
        <fullName evidence="3">30S ribosomal protein S6</fullName>
    </alternativeName>
</protein>
<reference key="1">
    <citation type="journal article" date="2008" name="Proc. Natl. Acad. Sci. U.S.A.">
        <title>Nitrogen fixation island and rhizosphere competence traits in the genome of root-associated Pseudomonas stutzeri A1501.</title>
        <authorList>
            <person name="Yan Y."/>
            <person name="Yang J."/>
            <person name="Dou Y."/>
            <person name="Chen M."/>
            <person name="Ping S."/>
            <person name="Peng J."/>
            <person name="Lu W."/>
            <person name="Zhang W."/>
            <person name="Yao Z."/>
            <person name="Li H."/>
            <person name="Liu W."/>
            <person name="He S."/>
            <person name="Geng L."/>
            <person name="Zhang X."/>
            <person name="Yang F."/>
            <person name="Yu H."/>
            <person name="Zhan Y."/>
            <person name="Li D."/>
            <person name="Lin Z."/>
            <person name="Wang Y."/>
            <person name="Elmerich C."/>
            <person name="Lin M."/>
            <person name="Jin Q."/>
        </authorList>
    </citation>
    <scope>NUCLEOTIDE SEQUENCE [LARGE SCALE GENOMIC DNA]</scope>
    <source>
        <strain>A1501</strain>
    </source>
</reference>
<dbReference type="EMBL" id="CP000304">
    <property type="protein sequence ID" value="ABP81281.1"/>
    <property type="molecule type" value="Genomic_DNA"/>
</dbReference>
<dbReference type="RefSeq" id="WP_011914674.1">
    <property type="nucleotide sequence ID" value="NC_009434.1"/>
</dbReference>
<dbReference type="SMR" id="A4VQN0"/>
<dbReference type="GeneID" id="66822921"/>
<dbReference type="KEGG" id="psa:PST_3656"/>
<dbReference type="eggNOG" id="COG0360">
    <property type="taxonomic scope" value="Bacteria"/>
</dbReference>
<dbReference type="HOGENOM" id="CLU_113441_6_1_6"/>
<dbReference type="Proteomes" id="UP000000233">
    <property type="component" value="Chromosome"/>
</dbReference>
<dbReference type="GO" id="GO:0022627">
    <property type="term" value="C:cytosolic small ribosomal subunit"/>
    <property type="evidence" value="ECO:0007669"/>
    <property type="project" value="TreeGrafter"/>
</dbReference>
<dbReference type="GO" id="GO:0070181">
    <property type="term" value="F:small ribosomal subunit rRNA binding"/>
    <property type="evidence" value="ECO:0007669"/>
    <property type="project" value="TreeGrafter"/>
</dbReference>
<dbReference type="GO" id="GO:0003735">
    <property type="term" value="F:structural constituent of ribosome"/>
    <property type="evidence" value="ECO:0007669"/>
    <property type="project" value="InterPro"/>
</dbReference>
<dbReference type="GO" id="GO:0006412">
    <property type="term" value="P:translation"/>
    <property type="evidence" value="ECO:0007669"/>
    <property type="project" value="UniProtKB-UniRule"/>
</dbReference>
<dbReference type="CDD" id="cd00473">
    <property type="entry name" value="bS6"/>
    <property type="match status" value="1"/>
</dbReference>
<dbReference type="FunFam" id="3.30.70.60:FF:000003">
    <property type="entry name" value="30S ribosomal protein S6"/>
    <property type="match status" value="1"/>
</dbReference>
<dbReference type="Gene3D" id="3.30.70.60">
    <property type="match status" value="1"/>
</dbReference>
<dbReference type="HAMAP" id="MF_00360">
    <property type="entry name" value="Ribosomal_bS6"/>
    <property type="match status" value="1"/>
</dbReference>
<dbReference type="InterPro" id="IPR000529">
    <property type="entry name" value="Ribosomal_bS6"/>
</dbReference>
<dbReference type="InterPro" id="IPR020815">
    <property type="entry name" value="Ribosomal_bS6_CS"/>
</dbReference>
<dbReference type="InterPro" id="IPR035980">
    <property type="entry name" value="Ribosomal_bS6_sf"/>
</dbReference>
<dbReference type="InterPro" id="IPR020814">
    <property type="entry name" value="Ribosomal_S6_plastid/chlpt"/>
</dbReference>
<dbReference type="InterPro" id="IPR014717">
    <property type="entry name" value="Transl_elong_EF1B/ribsomal_bS6"/>
</dbReference>
<dbReference type="NCBIfam" id="TIGR00166">
    <property type="entry name" value="S6"/>
    <property type="match status" value="1"/>
</dbReference>
<dbReference type="PANTHER" id="PTHR21011">
    <property type="entry name" value="MITOCHONDRIAL 28S RIBOSOMAL PROTEIN S6"/>
    <property type="match status" value="1"/>
</dbReference>
<dbReference type="PANTHER" id="PTHR21011:SF1">
    <property type="entry name" value="SMALL RIBOSOMAL SUBUNIT PROTEIN BS6M"/>
    <property type="match status" value="1"/>
</dbReference>
<dbReference type="Pfam" id="PF01250">
    <property type="entry name" value="Ribosomal_S6"/>
    <property type="match status" value="1"/>
</dbReference>
<dbReference type="SUPFAM" id="SSF54995">
    <property type="entry name" value="Ribosomal protein S6"/>
    <property type="match status" value="1"/>
</dbReference>
<dbReference type="PROSITE" id="PS01048">
    <property type="entry name" value="RIBOSOMAL_S6"/>
    <property type="match status" value="1"/>
</dbReference>
<gene>
    <name evidence="1" type="primary">rpsF</name>
    <name type="ordered locus">PST_3656</name>
</gene>
<feature type="chain" id="PRO_1000005321" description="Small ribosomal subunit protein bS6">
    <location>
        <begin position="1"/>
        <end position="138"/>
    </location>
</feature>
<feature type="region of interest" description="Disordered" evidence="2">
    <location>
        <begin position="97"/>
        <end position="138"/>
    </location>
</feature>
<feature type="compositionally biased region" description="Basic and acidic residues" evidence="2">
    <location>
        <begin position="97"/>
        <end position="121"/>
    </location>
</feature>
<feature type="compositionally biased region" description="Acidic residues" evidence="2">
    <location>
        <begin position="126"/>
        <end position="138"/>
    </location>
</feature>
<comment type="function">
    <text evidence="1">Binds together with bS18 to 16S ribosomal RNA.</text>
</comment>
<comment type="similarity">
    <text evidence="1">Belongs to the bacterial ribosomal protein bS6 family.</text>
</comment>
<evidence type="ECO:0000255" key="1">
    <source>
        <dbReference type="HAMAP-Rule" id="MF_00360"/>
    </source>
</evidence>
<evidence type="ECO:0000256" key="2">
    <source>
        <dbReference type="SAM" id="MobiDB-lite"/>
    </source>
</evidence>
<evidence type="ECO:0000305" key="3"/>
<organism>
    <name type="scientific">Stutzerimonas stutzeri (strain A1501)</name>
    <name type="common">Pseudomonas stutzeri</name>
    <dbReference type="NCBI Taxonomy" id="379731"/>
    <lineage>
        <taxon>Bacteria</taxon>
        <taxon>Pseudomonadati</taxon>
        <taxon>Pseudomonadota</taxon>
        <taxon>Gammaproteobacteria</taxon>
        <taxon>Pseudomonadales</taxon>
        <taxon>Pseudomonadaceae</taxon>
        <taxon>Stutzerimonas</taxon>
    </lineage>
</organism>
<name>RS6_STUS1</name>
<keyword id="KW-1185">Reference proteome</keyword>
<keyword id="KW-0687">Ribonucleoprotein</keyword>
<keyword id="KW-0689">Ribosomal protein</keyword>
<keyword id="KW-0694">RNA-binding</keyword>
<keyword id="KW-0699">rRNA-binding</keyword>
<sequence length="138" mass="16177">MRHYEIIFLVHPDQSEQVGGMVERYTKLIEEDGGKIHRLEDWGRRQLAYAINNVHKAHYVMLNVECSGKALAELEDNFRYNDAVIRNLIIRRDEAVTEQSEMLKAEENRSERRERRDRPDNTDGSNENDSDSDNNADE</sequence>
<proteinExistence type="inferred from homology"/>